<proteinExistence type="inferred from homology"/>
<evidence type="ECO:0000255" key="1">
    <source>
        <dbReference type="HAMAP-Rule" id="MF_00823"/>
    </source>
</evidence>
<evidence type="ECO:0000255" key="2">
    <source>
        <dbReference type="PROSITE-ProRule" id="PRU01137"/>
    </source>
</evidence>
<keyword id="KW-0067">ATP-binding</keyword>
<keyword id="KW-0963">Cytoplasm</keyword>
<keyword id="KW-0275">Fatty acid biosynthesis</keyword>
<keyword id="KW-0276">Fatty acid metabolism</keyword>
<keyword id="KW-0444">Lipid biosynthesis</keyword>
<keyword id="KW-0443">Lipid metabolism</keyword>
<keyword id="KW-0547">Nucleotide-binding</keyword>
<keyword id="KW-1185">Reference proteome</keyword>
<keyword id="KW-0808">Transferase</keyword>
<protein>
    <recommendedName>
        <fullName evidence="1">Acetyl-coenzyme A carboxylase carboxyl transferase subunit alpha</fullName>
        <shortName evidence="1">ACCase subunit alpha</shortName>
        <shortName evidence="1">Acetyl-CoA carboxylase carboxyltransferase subunit alpha</shortName>
        <ecNumber evidence="1">2.1.3.15</ecNumber>
    </recommendedName>
</protein>
<dbReference type="EC" id="2.1.3.15" evidence="1"/>
<dbReference type="EMBL" id="CP000157">
    <property type="protein sequence ID" value="ABC63090.1"/>
    <property type="molecule type" value="Genomic_DNA"/>
</dbReference>
<dbReference type="RefSeq" id="WP_011413926.1">
    <property type="nucleotide sequence ID" value="NC_007722.1"/>
</dbReference>
<dbReference type="SMR" id="Q2NB51"/>
<dbReference type="STRING" id="314225.ELI_04990"/>
<dbReference type="KEGG" id="eli:ELI_04990"/>
<dbReference type="eggNOG" id="COG0825">
    <property type="taxonomic scope" value="Bacteria"/>
</dbReference>
<dbReference type="HOGENOM" id="CLU_015486_0_2_5"/>
<dbReference type="OrthoDB" id="9808023at2"/>
<dbReference type="UniPathway" id="UPA00655">
    <property type="reaction ID" value="UER00711"/>
</dbReference>
<dbReference type="Proteomes" id="UP000008808">
    <property type="component" value="Chromosome"/>
</dbReference>
<dbReference type="GO" id="GO:0009317">
    <property type="term" value="C:acetyl-CoA carboxylase complex"/>
    <property type="evidence" value="ECO:0007669"/>
    <property type="project" value="InterPro"/>
</dbReference>
<dbReference type="GO" id="GO:0003989">
    <property type="term" value="F:acetyl-CoA carboxylase activity"/>
    <property type="evidence" value="ECO:0007669"/>
    <property type="project" value="InterPro"/>
</dbReference>
<dbReference type="GO" id="GO:0005524">
    <property type="term" value="F:ATP binding"/>
    <property type="evidence" value="ECO:0007669"/>
    <property type="project" value="UniProtKB-KW"/>
</dbReference>
<dbReference type="GO" id="GO:0016743">
    <property type="term" value="F:carboxyl- or carbamoyltransferase activity"/>
    <property type="evidence" value="ECO:0007669"/>
    <property type="project" value="UniProtKB-UniRule"/>
</dbReference>
<dbReference type="GO" id="GO:0006633">
    <property type="term" value="P:fatty acid biosynthetic process"/>
    <property type="evidence" value="ECO:0007669"/>
    <property type="project" value="UniProtKB-KW"/>
</dbReference>
<dbReference type="GO" id="GO:2001295">
    <property type="term" value="P:malonyl-CoA biosynthetic process"/>
    <property type="evidence" value="ECO:0007669"/>
    <property type="project" value="UniProtKB-UniRule"/>
</dbReference>
<dbReference type="Gene3D" id="3.90.226.10">
    <property type="entry name" value="2-enoyl-CoA Hydratase, Chain A, domain 1"/>
    <property type="match status" value="1"/>
</dbReference>
<dbReference type="HAMAP" id="MF_00823">
    <property type="entry name" value="AcetylCoA_CT_alpha"/>
    <property type="match status" value="1"/>
</dbReference>
<dbReference type="InterPro" id="IPR001095">
    <property type="entry name" value="Acetyl_CoA_COase_a_su"/>
</dbReference>
<dbReference type="InterPro" id="IPR029045">
    <property type="entry name" value="ClpP/crotonase-like_dom_sf"/>
</dbReference>
<dbReference type="InterPro" id="IPR011763">
    <property type="entry name" value="COA_CT_C"/>
</dbReference>
<dbReference type="NCBIfam" id="TIGR00513">
    <property type="entry name" value="accA"/>
    <property type="match status" value="1"/>
</dbReference>
<dbReference type="NCBIfam" id="NF041504">
    <property type="entry name" value="AccA_sub"/>
    <property type="match status" value="1"/>
</dbReference>
<dbReference type="NCBIfam" id="NF004344">
    <property type="entry name" value="PRK05724.1"/>
    <property type="match status" value="1"/>
</dbReference>
<dbReference type="PANTHER" id="PTHR42853">
    <property type="entry name" value="ACETYL-COENZYME A CARBOXYLASE CARBOXYL TRANSFERASE SUBUNIT ALPHA"/>
    <property type="match status" value="1"/>
</dbReference>
<dbReference type="PANTHER" id="PTHR42853:SF3">
    <property type="entry name" value="ACETYL-COENZYME A CARBOXYLASE CARBOXYL TRANSFERASE SUBUNIT ALPHA, CHLOROPLASTIC"/>
    <property type="match status" value="1"/>
</dbReference>
<dbReference type="Pfam" id="PF03255">
    <property type="entry name" value="ACCA"/>
    <property type="match status" value="1"/>
</dbReference>
<dbReference type="PRINTS" id="PR01069">
    <property type="entry name" value="ACCCTRFRASEA"/>
</dbReference>
<dbReference type="SUPFAM" id="SSF52096">
    <property type="entry name" value="ClpP/crotonase"/>
    <property type="match status" value="1"/>
</dbReference>
<dbReference type="PROSITE" id="PS50989">
    <property type="entry name" value="COA_CT_CTER"/>
    <property type="match status" value="1"/>
</dbReference>
<feature type="chain" id="PRO_1000062618" description="Acetyl-coenzyme A carboxylase carboxyl transferase subunit alpha">
    <location>
        <begin position="1"/>
        <end position="314"/>
    </location>
</feature>
<feature type="domain" description="CoA carboxyltransferase C-terminal" evidence="2">
    <location>
        <begin position="38"/>
        <end position="292"/>
    </location>
</feature>
<name>ACCA_ERYLH</name>
<accession>Q2NB51</accession>
<organism>
    <name type="scientific">Erythrobacter litoralis (strain HTCC2594)</name>
    <dbReference type="NCBI Taxonomy" id="314225"/>
    <lineage>
        <taxon>Bacteria</taxon>
        <taxon>Pseudomonadati</taxon>
        <taxon>Pseudomonadota</taxon>
        <taxon>Alphaproteobacteria</taxon>
        <taxon>Sphingomonadales</taxon>
        <taxon>Erythrobacteraceae</taxon>
        <taxon>Erythrobacter/Porphyrobacter group</taxon>
        <taxon>Erythrobacter</taxon>
    </lineage>
</organism>
<comment type="function">
    <text evidence="1">Component of the acetyl coenzyme A carboxylase (ACC) complex. First, biotin carboxylase catalyzes the carboxylation of biotin on its carrier protein (BCCP) and then the CO(2) group is transferred by the carboxyltransferase to acetyl-CoA to form malonyl-CoA.</text>
</comment>
<comment type="catalytic activity">
    <reaction evidence="1">
        <text>N(6)-carboxybiotinyl-L-lysyl-[protein] + acetyl-CoA = N(6)-biotinyl-L-lysyl-[protein] + malonyl-CoA</text>
        <dbReference type="Rhea" id="RHEA:54728"/>
        <dbReference type="Rhea" id="RHEA-COMP:10505"/>
        <dbReference type="Rhea" id="RHEA-COMP:10506"/>
        <dbReference type="ChEBI" id="CHEBI:57288"/>
        <dbReference type="ChEBI" id="CHEBI:57384"/>
        <dbReference type="ChEBI" id="CHEBI:83144"/>
        <dbReference type="ChEBI" id="CHEBI:83145"/>
        <dbReference type="EC" id="2.1.3.15"/>
    </reaction>
</comment>
<comment type="pathway">
    <text evidence="1">Lipid metabolism; malonyl-CoA biosynthesis; malonyl-CoA from acetyl-CoA: step 1/1.</text>
</comment>
<comment type="subunit">
    <text evidence="1">Acetyl-CoA carboxylase is a heterohexamer composed of biotin carboxyl carrier protein (AccB), biotin carboxylase (AccC) and two subunits each of ACCase subunit alpha (AccA) and ACCase subunit beta (AccD).</text>
</comment>
<comment type="subcellular location">
    <subcellularLocation>
        <location evidence="1">Cytoplasm</location>
    </subcellularLocation>
</comment>
<comment type="similarity">
    <text evidence="1">Belongs to the AccA family.</text>
</comment>
<reference key="1">
    <citation type="journal article" date="2009" name="J. Bacteriol.">
        <title>Complete genome sequence of Erythrobacter litoralis HTCC2594.</title>
        <authorList>
            <person name="Oh H.M."/>
            <person name="Giovannoni S.J."/>
            <person name="Ferriera S."/>
            <person name="Johnson J."/>
            <person name="Cho J.C."/>
        </authorList>
    </citation>
    <scope>NUCLEOTIDE SEQUENCE [LARGE SCALE GENOMIC DNA]</scope>
    <source>
        <strain>HTCC2594</strain>
    </source>
</reference>
<gene>
    <name evidence="1" type="primary">accA</name>
    <name type="ordered locus">ELI_04990</name>
</gene>
<sequence length="314" mass="34120">MNSYLEFEKPVAQLEARIAELRSAAEGDEVDISNELKRLERKSAALLTSTYSALTPWQKTQVARHPQRPHFRDFVKHAFDEFVPLGGDRNYGEDEAIMGGLATLRGRKVVLIGHEKGNDTESRLRHNFGMGKPEGYRKAIRLMDLAGRFGLPVVTLVDTSGAFPGVEAEERGQAEAIARSTEACLALPVPMVATIVGEGGSGGAVALASAERVLMLEHAVYSVISPEGCASILWRTAEKAPDAAEAMKVTAQHLLDLKVIDRIVKEPTGGAHRDPSAICETLANAIDEELDALADLPGETLRRMREERFLQIGG</sequence>